<proteinExistence type="inferred from homology"/>
<accession>B1HX36</accession>
<sequence>MIWKEILIRYGELSTKGRNKMDFIRRLRENIRHAFADLGHLHIRTERDRMFIAIENDAQMQTLVTGLPKIFGIQSFSPVAACEKDMESMKQLAITIMETFKDQPYTFKVEVKRTDKTFPLESHAIQREIGGYVLPQFNNLSVKVKQPDIELRVEVRHDATYMMAQVIPGAGGMPVGSNGKSLLMLSGGIDSPVAGYLMMKRGVRLEAIHFFSPPYTSQNSLEKVKVLANELTKFGANIRLHVIPFTEIQVLIKEKVPSNVSMTTTRRMMLKVADQVREEIGALAIVTGESLGQVASQTLESLTAINAVTNTPILRPLISSDKLEIIELAEQIGTYETSIQPFEDCCTIFTPASPKTKPKLEKVEHYESFSDFDELIARAVKNREVYIFPKKEEEQQQDKFADLL</sequence>
<feature type="chain" id="PRO_1000090021" description="Probable tRNA sulfurtransferase">
    <location>
        <begin position="1"/>
        <end position="404"/>
    </location>
</feature>
<feature type="domain" description="THUMP" evidence="1">
    <location>
        <begin position="61"/>
        <end position="166"/>
    </location>
</feature>
<feature type="binding site" evidence="1">
    <location>
        <begin position="184"/>
        <end position="185"/>
    </location>
    <ligand>
        <name>ATP</name>
        <dbReference type="ChEBI" id="CHEBI:30616"/>
    </ligand>
</feature>
<feature type="binding site" evidence="1">
    <location>
        <begin position="209"/>
        <end position="210"/>
    </location>
    <ligand>
        <name>ATP</name>
        <dbReference type="ChEBI" id="CHEBI:30616"/>
    </ligand>
</feature>
<feature type="binding site" evidence="1">
    <location>
        <position position="266"/>
    </location>
    <ligand>
        <name>ATP</name>
        <dbReference type="ChEBI" id="CHEBI:30616"/>
    </ligand>
</feature>
<feature type="binding site" evidence="1">
    <location>
        <position position="288"/>
    </location>
    <ligand>
        <name>ATP</name>
        <dbReference type="ChEBI" id="CHEBI:30616"/>
    </ligand>
</feature>
<feature type="binding site" evidence="1">
    <location>
        <position position="297"/>
    </location>
    <ligand>
        <name>ATP</name>
        <dbReference type="ChEBI" id="CHEBI:30616"/>
    </ligand>
</feature>
<name>THII_LYSSC</name>
<protein>
    <recommendedName>
        <fullName evidence="1">Probable tRNA sulfurtransferase</fullName>
        <ecNumber evidence="1">2.8.1.4</ecNumber>
    </recommendedName>
    <alternativeName>
        <fullName evidence="1">Sulfur carrier protein ThiS sulfurtransferase</fullName>
    </alternativeName>
    <alternativeName>
        <fullName evidence="1">Thiamine biosynthesis protein ThiI</fullName>
    </alternativeName>
    <alternativeName>
        <fullName evidence="1">tRNA 4-thiouridine synthase</fullName>
    </alternativeName>
</protein>
<comment type="function">
    <text evidence="1">Catalyzes the ATP-dependent transfer of a sulfur to tRNA to produce 4-thiouridine in position 8 of tRNAs, which functions as a near-UV photosensor. Also catalyzes the transfer of sulfur to the sulfur carrier protein ThiS, forming ThiS-thiocarboxylate. This is a step in the synthesis of thiazole, in the thiamine biosynthesis pathway. The sulfur is donated as persulfide by IscS.</text>
</comment>
<comment type="catalytic activity">
    <reaction evidence="1">
        <text>[ThiI sulfur-carrier protein]-S-sulfanyl-L-cysteine + a uridine in tRNA + 2 reduced [2Fe-2S]-[ferredoxin] + ATP + H(+) = [ThiI sulfur-carrier protein]-L-cysteine + a 4-thiouridine in tRNA + 2 oxidized [2Fe-2S]-[ferredoxin] + AMP + diphosphate</text>
        <dbReference type="Rhea" id="RHEA:24176"/>
        <dbReference type="Rhea" id="RHEA-COMP:10000"/>
        <dbReference type="Rhea" id="RHEA-COMP:10001"/>
        <dbReference type="Rhea" id="RHEA-COMP:13337"/>
        <dbReference type="Rhea" id="RHEA-COMP:13338"/>
        <dbReference type="Rhea" id="RHEA-COMP:13339"/>
        <dbReference type="Rhea" id="RHEA-COMP:13340"/>
        <dbReference type="ChEBI" id="CHEBI:15378"/>
        <dbReference type="ChEBI" id="CHEBI:29950"/>
        <dbReference type="ChEBI" id="CHEBI:30616"/>
        <dbReference type="ChEBI" id="CHEBI:33019"/>
        <dbReference type="ChEBI" id="CHEBI:33737"/>
        <dbReference type="ChEBI" id="CHEBI:33738"/>
        <dbReference type="ChEBI" id="CHEBI:61963"/>
        <dbReference type="ChEBI" id="CHEBI:65315"/>
        <dbReference type="ChEBI" id="CHEBI:136798"/>
        <dbReference type="ChEBI" id="CHEBI:456215"/>
        <dbReference type="EC" id="2.8.1.4"/>
    </reaction>
</comment>
<comment type="catalytic activity">
    <reaction evidence="1">
        <text>[ThiS sulfur-carrier protein]-C-terminal Gly-Gly-AMP + S-sulfanyl-L-cysteinyl-[cysteine desulfurase] + AH2 = [ThiS sulfur-carrier protein]-C-terminal-Gly-aminoethanethioate + L-cysteinyl-[cysteine desulfurase] + A + AMP + 2 H(+)</text>
        <dbReference type="Rhea" id="RHEA:43340"/>
        <dbReference type="Rhea" id="RHEA-COMP:12157"/>
        <dbReference type="Rhea" id="RHEA-COMP:12158"/>
        <dbReference type="Rhea" id="RHEA-COMP:12910"/>
        <dbReference type="Rhea" id="RHEA-COMP:19908"/>
        <dbReference type="ChEBI" id="CHEBI:13193"/>
        <dbReference type="ChEBI" id="CHEBI:15378"/>
        <dbReference type="ChEBI" id="CHEBI:17499"/>
        <dbReference type="ChEBI" id="CHEBI:29950"/>
        <dbReference type="ChEBI" id="CHEBI:61963"/>
        <dbReference type="ChEBI" id="CHEBI:90618"/>
        <dbReference type="ChEBI" id="CHEBI:232372"/>
        <dbReference type="ChEBI" id="CHEBI:456215"/>
    </reaction>
</comment>
<comment type="pathway">
    <text evidence="1">Cofactor biosynthesis; thiamine diphosphate biosynthesis.</text>
</comment>
<comment type="subcellular location">
    <subcellularLocation>
        <location evidence="1">Cytoplasm</location>
    </subcellularLocation>
</comment>
<comment type="similarity">
    <text evidence="1">Belongs to the ThiI family.</text>
</comment>
<evidence type="ECO:0000255" key="1">
    <source>
        <dbReference type="HAMAP-Rule" id="MF_00021"/>
    </source>
</evidence>
<dbReference type="EC" id="2.8.1.4" evidence="1"/>
<dbReference type="EMBL" id="CP000817">
    <property type="protein sequence ID" value="ACA41612.1"/>
    <property type="molecule type" value="Genomic_DNA"/>
</dbReference>
<dbReference type="RefSeq" id="WP_012295643.1">
    <property type="nucleotide sequence ID" value="NC_010382.1"/>
</dbReference>
<dbReference type="SMR" id="B1HX36"/>
<dbReference type="EnsemblBacteria" id="ACA41612">
    <property type="protein sequence ID" value="ACA41612"/>
    <property type="gene ID" value="Bsph_4151"/>
</dbReference>
<dbReference type="KEGG" id="lsp:Bsph_4151"/>
<dbReference type="HOGENOM" id="CLU_037952_4_0_9"/>
<dbReference type="UniPathway" id="UPA00060"/>
<dbReference type="Proteomes" id="UP000002164">
    <property type="component" value="Chromosome"/>
</dbReference>
<dbReference type="GO" id="GO:0005829">
    <property type="term" value="C:cytosol"/>
    <property type="evidence" value="ECO:0007669"/>
    <property type="project" value="TreeGrafter"/>
</dbReference>
<dbReference type="GO" id="GO:0005524">
    <property type="term" value="F:ATP binding"/>
    <property type="evidence" value="ECO:0007669"/>
    <property type="project" value="UniProtKB-UniRule"/>
</dbReference>
<dbReference type="GO" id="GO:0004810">
    <property type="term" value="F:CCA tRNA nucleotidyltransferase activity"/>
    <property type="evidence" value="ECO:0007669"/>
    <property type="project" value="InterPro"/>
</dbReference>
<dbReference type="GO" id="GO:0000049">
    <property type="term" value="F:tRNA binding"/>
    <property type="evidence" value="ECO:0007669"/>
    <property type="project" value="UniProtKB-UniRule"/>
</dbReference>
<dbReference type="GO" id="GO:0140741">
    <property type="term" value="F:tRNA-uracil-4 sulfurtransferase activity"/>
    <property type="evidence" value="ECO:0007669"/>
    <property type="project" value="UniProtKB-EC"/>
</dbReference>
<dbReference type="GO" id="GO:0009228">
    <property type="term" value="P:thiamine biosynthetic process"/>
    <property type="evidence" value="ECO:0007669"/>
    <property type="project" value="UniProtKB-KW"/>
</dbReference>
<dbReference type="GO" id="GO:0009229">
    <property type="term" value="P:thiamine diphosphate biosynthetic process"/>
    <property type="evidence" value="ECO:0007669"/>
    <property type="project" value="UniProtKB-UniRule"/>
</dbReference>
<dbReference type="GO" id="GO:0052837">
    <property type="term" value="P:thiazole biosynthetic process"/>
    <property type="evidence" value="ECO:0007669"/>
    <property type="project" value="TreeGrafter"/>
</dbReference>
<dbReference type="GO" id="GO:0002937">
    <property type="term" value="P:tRNA 4-thiouridine biosynthesis"/>
    <property type="evidence" value="ECO:0007669"/>
    <property type="project" value="TreeGrafter"/>
</dbReference>
<dbReference type="CDD" id="cd01712">
    <property type="entry name" value="PPase_ThiI"/>
    <property type="match status" value="1"/>
</dbReference>
<dbReference type="CDD" id="cd11716">
    <property type="entry name" value="THUMP_ThiI"/>
    <property type="match status" value="1"/>
</dbReference>
<dbReference type="FunFam" id="3.40.50.620:FF:000053">
    <property type="entry name" value="Probable tRNA sulfurtransferase"/>
    <property type="match status" value="1"/>
</dbReference>
<dbReference type="Gene3D" id="3.30.2130.30">
    <property type="match status" value="1"/>
</dbReference>
<dbReference type="Gene3D" id="3.40.50.620">
    <property type="entry name" value="HUPs"/>
    <property type="match status" value="1"/>
</dbReference>
<dbReference type="HAMAP" id="MF_00021">
    <property type="entry name" value="ThiI"/>
    <property type="match status" value="1"/>
</dbReference>
<dbReference type="InterPro" id="IPR014729">
    <property type="entry name" value="Rossmann-like_a/b/a_fold"/>
</dbReference>
<dbReference type="InterPro" id="IPR020536">
    <property type="entry name" value="ThiI_AANH"/>
</dbReference>
<dbReference type="InterPro" id="IPR054173">
    <property type="entry name" value="ThiI_fer"/>
</dbReference>
<dbReference type="InterPro" id="IPR049961">
    <property type="entry name" value="ThiI_N"/>
</dbReference>
<dbReference type="InterPro" id="IPR004114">
    <property type="entry name" value="THUMP_dom"/>
</dbReference>
<dbReference type="InterPro" id="IPR049962">
    <property type="entry name" value="THUMP_ThiI"/>
</dbReference>
<dbReference type="InterPro" id="IPR003720">
    <property type="entry name" value="tRNA_STrfase"/>
</dbReference>
<dbReference type="InterPro" id="IPR050102">
    <property type="entry name" value="tRNA_sulfurtransferase_ThiI"/>
</dbReference>
<dbReference type="NCBIfam" id="TIGR00342">
    <property type="entry name" value="tRNA uracil 4-sulfurtransferase ThiI"/>
    <property type="match status" value="1"/>
</dbReference>
<dbReference type="PANTHER" id="PTHR43209">
    <property type="entry name" value="TRNA SULFURTRANSFERASE"/>
    <property type="match status" value="1"/>
</dbReference>
<dbReference type="PANTHER" id="PTHR43209:SF1">
    <property type="entry name" value="TRNA SULFURTRANSFERASE"/>
    <property type="match status" value="1"/>
</dbReference>
<dbReference type="Pfam" id="PF02568">
    <property type="entry name" value="ThiI"/>
    <property type="match status" value="1"/>
</dbReference>
<dbReference type="Pfam" id="PF22025">
    <property type="entry name" value="ThiI_fer"/>
    <property type="match status" value="1"/>
</dbReference>
<dbReference type="Pfam" id="PF02926">
    <property type="entry name" value="THUMP"/>
    <property type="match status" value="1"/>
</dbReference>
<dbReference type="SMART" id="SM00981">
    <property type="entry name" value="THUMP"/>
    <property type="match status" value="1"/>
</dbReference>
<dbReference type="SUPFAM" id="SSF52402">
    <property type="entry name" value="Adenine nucleotide alpha hydrolases-like"/>
    <property type="match status" value="1"/>
</dbReference>
<dbReference type="SUPFAM" id="SSF143437">
    <property type="entry name" value="THUMP domain-like"/>
    <property type="match status" value="1"/>
</dbReference>
<dbReference type="PROSITE" id="PS51165">
    <property type="entry name" value="THUMP"/>
    <property type="match status" value="1"/>
</dbReference>
<gene>
    <name evidence="1" type="primary">thiI</name>
    <name type="ordered locus">Bsph_4151</name>
</gene>
<keyword id="KW-0067">ATP-binding</keyword>
<keyword id="KW-0963">Cytoplasm</keyword>
<keyword id="KW-0547">Nucleotide-binding</keyword>
<keyword id="KW-0694">RNA-binding</keyword>
<keyword id="KW-0784">Thiamine biosynthesis</keyword>
<keyword id="KW-0808">Transferase</keyword>
<keyword id="KW-0820">tRNA-binding</keyword>
<organism>
    <name type="scientific">Lysinibacillus sphaericus (strain C3-41)</name>
    <dbReference type="NCBI Taxonomy" id="444177"/>
    <lineage>
        <taxon>Bacteria</taxon>
        <taxon>Bacillati</taxon>
        <taxon>Bacillota</taxon>
        <taxon>Bacilli</taxon>
        <taxon>Bacillales</taxon>
        <taxon>Bacillaceae</taxon>
        <taxon>Lysinibacillus</taxon>
    </lineage>
</organism>
<reference key="1">
    <citation type="journal article" date="2008" name="J. Bacteriol.">
        <title>Complete genome sequence of the mosquitocidal bacterium Bacillus sphaericus C3-41 and comparison with those of closely related Bacillus species.</title>
        <authorList>
            <person name="Hu X."/>
            <person name="Fan W."/>
            <person name="Han B."/>
            <person name="Liu H."/>
            <person name="Zheng D."/>
            <person name="Li Q."/>
            <person name="Dong W."/>
            <person name="Yan J."/>
            <person name="Gao M."/>
            <person name="Berry C."/>
            <person name="Yuan Z."/>
        </authorList>
    </citation>
    <scope>NUCLEOTIDE SEQUENCE [LARGE SCALE GENOMIC DNA]</scope>
    <source>
        <strain>C3-41</strain>
    </source>
</reference>